<accession>Q9CQP3</accession>
<feature type="chain" id="PRO_0000129168" description="Coiled-coil-helix-coiled-coil-helix domain-containing protein 5">
    <location>
        <begin position="1"/>
        <end position="110"/>
    </location>
</feature>
<feature type="domain" description="CHCH 1" evidence="3">
    <location>
        <begin position="9"/>
        <end position="52"/>
    </location>
</feature>
<feature type="domain" description="CHCH 2" evidence="3">
    <location>
        <begin position="55"/>
        <end position="97"/>
    </location>
</feature>
<feature type="short sequence motif" description="Cx9C motif 1" evidence="3">
    <location>
        <begin position="12"/>
        <end position="22"/>
    </location>
</feature>
<feature type="short sequence motif" description="Cx9C motif 2" evidence="3">
    <location>
        <begin position="34"/>
        <end position="44"/>
    </location>
</feature>
<feature type="short sequence motif" description="Cx9C motif 3" evidence="3">
    <location>
        <begin position="58"/>
        <end position="68"/>
    </location>
</feature>
<feature type="short sequence motif" description="Cx9C motif 4" evidence="3">
    <location>
        <begin position="79"/>
        <end position="89"/>
    </location>
</feature>
<feature type="modified residue" description="N-acetylmethionine" evidence="2">
    <location>
        <position position="1"/>
    </location>
</feature>
<feature type="disulfide bond" evidence="3">
    <location>
        <begin position="12"/>
        <end position="44"/>
    </location>
</feature>
<feature type="disulfide bond" evidence="3">
    <location>
        <begin position="22"/>
        <end position="34"/>
    </location>
</feature>
<feature type="disulfide bond" evidence="3">
    <location>
        <begin position="58"/>
        <end position="89"/>
    </location>
</feature>
<feature type="disulfide bond" evidence="3">
    <location>
        <begin position="68"/>
        <end position="79"/>
    </location>
</feature>
<gene>
    <name type="primary">Chchd5</name>
</gene>
<evidence type="ECO:0000250" key="1"/>
<evidence type="ECO:0000250" key="2">
    <source>
        <dbReference type="UniProtKB" id="Q9BSY4"/>
    </source>
</evidence>
<evidence type="ECO:0000255" key="3">
    <source>
        <dbReference type="PROSITE-ProRule" id="PRU01150"/>
    </source>
</evidence>
<evidence type="ECO:0000305" key="4"/>
<sequence>MQAALEVTARYCSRELDQYGQCVAAKPESWHRDCHHLKMSIARCTSSHPIIRQIRQACAEPFEAFEKCLRLNEAAVGNCAEHMRRFLQCAEQVQPPSSPTTGEAQPLPAS</sequence>
<reference key="1">
    <citation type="journal article" date="2005" name="Science">
        <title>The transcriptional landscape of the mammalian genome.</title>
        <authorList>
            <person name="Carninci P."/>
            <person name="Kasukawa T."/>
            <person name="Katayama S."/>
            <person name="Gough J."/>
            <person name="Frith M.C."/>
            <person name="Maeda N."/>
            <person name="Oyama R."/>
            <person name="Ravasi T."/>
            <person name="Lenhard B."/>
            <person name="Wells C."/>
            <person name="Kodzius R."/>
            <person name="Shimokawa K."/>
            <person name="Bajic V.B."/>
            <person name="Brenner S.E."/>
            <person name="Batalov S."/>
            <person name="Forrest A.R."/>
            <person name="Zavolan M."/>
            <person name="Davis M.J."/>
            <person name="Wilming L.G."/>
            <person name="Aidinis V."/>
            <person name="Allen J.E."/>
            <person name="Ambesi-Impiombato A."/>
            <person name="Apweiler R."/>
            <person name="Aturaliya R.N."/>
            <person name="Bailey T.L."/>
            <person name="Bansal M."/>
            <person name="Baxter L."/>
            <person name="Beisel K.W."/>
            <person name="Bersano T."/>
            <person name="Bono H."/>
            <person name="Chalk A.M."/>
            <person name="Chiu K.P."/>
            <person name="Choudhary V."/>
            <person name="Christoffels A."/>
            <person name="Clutterbuck D.R."/>
            <person name="Crowe M.L."/>
            <person name="Dalla E."/>
            <person name="Dalrymple B.P."/>
            <person name="de Bono B."/>
            <person name="Della Gatta G."/>
            <person name="di Bernardo D."/>
            <person name="Down T."/>
            <person name="Engstrom P."/>
            <person name="Fagiolini M."/>
            <person name="Faulkner G."/>
            <person name="Fletcher C.F."/>
            <person name="Fukushima T."/>
            <person name="Furuno M."/>
            <person name="Futaki S."/>
            <person name="Gariboldi M."/>
            <person name="Georgii-Hemming P."/>
            <person name="Gingeras T.R."/>
            <person name="Gojobori T."/>
            <person name="Green R.E."/>
            <person name="Gustincich S."/>
            <person name="Harbers M."/>
            <person name="Hayashi Y."/>
            <person name="Hensch T.K."/>
            <person name="Hirokawa N."/>
            <person name="Hill D."/>
            <person name="Huminiecki L."/>
            <person name="Iacono M."/>
            <person name="Ikeo K."/>
            <person name="Iwama A."/>
            <person name="Ishikawa T."/>
            <person name="Jakt M."/>
            <person name="Kanapin A."/>
            <person name="Katoh M."/>
            <person name="Kawasawa Y."/>
            <person name="Kelso J."/>
            <person name="Kitamura H."/>
            <person name="Kitano H."/>
            <person name="Kollias G."/>
            <person name="Krishnan S.P."/>
            <person name="Kruger A."/>
            <person name="Kummerfeld S.K."/>
            <person name="Kurochkin I.V."/>
            <person name="Lareau L.F."/>
            <person name="Lazarevic D."/>
            <person name="Lipovich L."/>
            <person name="Liu J."/>
            <person name="Liuni S."/>
            <person name="McWilliam S."/>
            <person name="Madan Babu M."/>
            <person name="Madera M."/>
            <person name="Marchionni L."/>
            <person name="Matsuda H."/>
            <person name="Matsuzawa S."/>
            <person name="Miki H."/>
            <person name="Mignone F."/>
            <person name="Miyake S."/>
            <person name="Morris K."/>
            <person name="Mottagui-Tabar S."/>
            <person name="Mulder N."/>
            <person name="Nakano N."/>
            <person name="Nakauchi H."/>
            <person name="Ng P."/>
            <person name="Nilsson R."/>
            <person name="Nishiguchi S."/>
            <person name="Nishikawa S."/>
            <person name="Nori F."/>
            <person name="Ohara O."/>
            <person name="Okazaki Y."/>
            <person name="Orlando V."/>
            <person name="Pang K.C."/>
            <person name="Pavan W.J."/>
            <person name="Pavesi G."/>
            <person name="Pesole G."/>
            <person name="Petrovsky N."/>
            <person name="Piazza S."/>
            <person name="Reed J."/>
            <person name="Reid J.F."/>
            <person name="Ring B.Z."/>
            <person name="Ringwald M."/>
            <person name="Rost B."/>
            <person name="Ruan Y."/>
            <person name="Salzberg S.L."/>
            <person name="Sandelin A."/>
            <person name="Schneider C."/>
            <person name="Schoenbach C."/>
            <person name="Sekiguchi K."/>
            <person name="Semple C.A."/>
            <person name="Seno S."/>
            <person name="Sessa L."/>
            <person name="Sheng Y."/>
            <person name="Shibata Y."/>
            <person name="Shimada H."/>
            <person name="Shimada K."/>
            <person name="Silva D."/>
            <person name="Sinclair B."/>
            <person name="Sperling S."/>
            <person name="Stupka E."/>
            <person name="Sugiura K."/>
            <person name="Sultana R."/>
            <person name="Takenaka Y."/>
            <person name="Taki K."/>
            <person name="Tammoja K."/>
            <person name="Tan S.L."/>
            <person name="Tang S."/>
            <person name="Taylor M.S."/>
            <person name="Tegner J."/>
            <person name="Teichmann S.A."/>
            <person name="Ueda H.R."/>
            <person name="van Nimwegen E."/>
            <person name="Verardo R."/>
            <person name="Wei C.L."/>
            <person name="Yagi K."/>
            <person name="Yamanishi H."/>
            <person name="Zabarovsky E."/>
            <person name="Zhu S."/>
            <person name="Zimmer A."/>
            <person name="Hide W."/>
            <person name="Bult C."/>
            <person name="Grimmond S.M."/>
            <person name="Teasdale R.D."/>
            <person name="Liu E.T."/>
            <person name="Brusic V."/>
            <person name="Quackenbush J."/>
            <person name="Wahlestedt C."/>
            <person name="Mattick J.S."/>
            <person name="Hume D.A."/>
            <person name="Kai C."/>
            <person name="Sasaki D."/>
            <person name="Tomaru Y."/>
            <person name="Fukuda S."/>
            <person name="Kanamori-Katayama M."/>
            <person name="Suzuki M."/>
            <person name="Aoki J."/>
            <person name="Arakawa T."/>
            <person name="Iida J."/>
            <person name="Imamura K."/>
            <person name="Itoh M."/>
            <person name="Kato T."/>
            <person name="Kawaji H."/>
            <person name="Kawagashira N."/>
            <person name="Kawashima T."/>
            <person name="Kojima M."/>
            <person name="Kondo S."/>
            <person name="Konno H."/>
            <person name="Nakano K."/>
            <person name="Ninomiya N."/>
            <person name="Nishio T."/>
            <person name="Okada M."/>
            <person name="Plessy C."/>
            <person name="Shibata K."/>
            <person name="Shiraki T."/>
            <person name="Suzuki S."/>
            <person name="Tagami M."/>
            <person name="Waki K."/>
            <person name="Watahiki A."/>
            <person name="Okamura-Oho Y."/>
            <person name="Suzuki H."/>
            <person name="Kawai J."/>
            <person name="Hayashizaki Y."/>
        </authorList>
    </citation>
    <scope>NUCLEOTIDE SEQUENCE [LARGE SCALE MRNA]</scope>
    <source>
        <strain>C57BL/6J</strain>
    </source>
</reference>
<reference key="2">
    <citation type="journal article" date="2010" name="Cell">
        <title>A tissue-specific atlas of mouse protein phosphorylation and expression.</title>
        <authorList>
            <person name="Huttlin E.L."/>
            <person name="Jedrychowski M.P."/>
            <person name="Elias J.E."/>
            <person name="Goswami T."/>
            <person name="Rad R."/>
            <person name="Beausoleil S.A."/>
            <person name="Villen J."/>
            <person name="Haas W."/>
            <person name="Sowa M.E."/>
            <person name="Gygi S.P."/>
        </authorList>
    </citation>
    <scope>IDENTIFICATION BY MASS SPECTROMETRY [LARGE SCALE ANALYSIS]</scope>
    <source>
        <tissue>Testis</tissue>
    </source>
</reference>
<comment type="subunit">
    <text evidence="1">Monomer.</text>
</comment>
<comment type="subcellular location">
    <subcellularLocation>
        <location evidence="4">Mitochondrion intermembrane space</location>
    </subcellularLocation>
</comment>
<protein>
    <recommendedName>
        <fullName>Coiled-coil-helix-coiled-coil-helix domain-containing protein 5</fullName>
    </recommendedName>
</protein>
<proteinExistence type="evidence at protein level"/>
<dbReference type="EMBL" id="AK003341">
    <property type="protein sequence ID" value="BAB22728.1"/>
    <property type="molecule type" value="mRNA"/>
</dbReference>
<dbReference type="EMBL" id="AK013018">
    <property type="protein sequence ID" value="BAB28600.1"/>
    <property type="molecule type" value="mRNA"/>
</dbReference>
<dbReference type="CCDS" id="CCDS16721.1"/>
<dbReference type="RefSeq" id="NP_079671.1">
    <property type="nucleotide sequence ID" value="NM_025395.3"/>
</dbReference>
<dbReference type="SMR" id="Q9CQP3"/>
<dbReference type="FunCoup" id="Q9CQP3">
    <property type="interactions" value="362"/>
</dbReference>
<dbReference type="STRING" id="10090.ENSMUSP00000044253"/>
<dbReference type="PhosphoSitePlus" id="Q9CQP3"/>
<dbReference type="PaxDb" id="10090-ENSMUSP00000044253"/>
<dbReference type="ProteomicsDB" id="279070"/>
<dbReference type="Pumba" id="Q9CQP3"/>
<dbReference type="Antibodypedia" id="47917">
    <property type="antibodies" value="221 antibodies from 13 providers"/>
</dbReference>
<dbReference type="DNASU" id="66170"/>
<dbReference type="Ensembl" id="ENSMUST00000035481.5">
    <property type="protein sequence ID" value="ENSMUSP00000044253.5"/>
    <property type="gene ID" value="ENSMUSG00000037938.5"/>
</dbReference>
<dbReference type="GeneID" id="66170"/>
<dbReference type="KEGG" id="mmu:66170"/>
<dbReference type="UCSC" id="uc008mhg.2">
    <property type="organism name" value="mouse"/>
</dbReference>
<dbReference type="AGR" id="MGI:1913420"/>
<dbReference type="CTD" id="84269"/>
<dbReference type="MGI" id="MGI:1913420">
    <property type="gene designation" value="Chchd5"/>
</dbReference>
<dbReference type="VEuPathDB" id="HostDB:ENSMUSG00000037938"/>
<dbReference type="eggNOG" id="ENOG502S5BR">
    <property type="taxonomic scope" value="Eukaryota"/>
</dbReference>
<dbReference type="GeneTree" id="ENSGT00390000007919"/>
<dbReference type="HOGENOM" id="CLU_165152_0_0_1"/>
<dbReference type="InParanoid" id="Q9CQP3"/>
<dbReference type="OMA" id="QKIRRDC"/>
<dbReference type="OrthoDB" id="2581252at2759"/>
<dbReference type="PhylomeDB" id="Q9CQP3"/>
<dbReference type="TreeFam" id="TF333181"/>
<dbReference type="BioGRID-ORCS" id="66170">
    <property type="hits" value="13 hits in 77 CRISPR screens"/>
</dbReference>
<dbReference type="ChiTaRS" id="Chchd5">
    <property type="organism name" value="mouse"/>
</dbReference>
<dbReference type="PRO" id="PR:Q9CQP3"/>
<dbReference type="Proteomes" id="UP000000589">
    <property type="component" value="Chromosome 2"/>
</dbReference>
<dbReference type="RNAct" id="Q9CQP3">
    <property type="molecule type" value="protein"/>
</dbReference>
<dbReference type="Bgee" id="ENSMUSG00000037938">
    <property type="expression patterns" value="Expressed in embryonic cell in blastocyst and 216 other cell types or tissues"/>
</dbReference>
<dbReference type="ExpressionAtlas" id="Q9CQP3">
    <property type="expression patterns" value="baseline and differential"/>
</dbReference>
<dbReference type="GO" id="GO:0005758">
    <property type="term" value="C:mitochondrial intermembrane space"/>
    <property type="evidence" value="ECO:0007669"/>
    <property type="project" value="UniProtKB-SubCell"/>
</dbReference>
<dbReference type="Gene3D" id="1.10.287.2900">
    <property type="match status" value="2"/>
</dbReference>
<dbReference type="InterPro" id="IPR010625">
    <property type="entry name" value="CHCH"/>
</dbReference>
<dbReference type="InterPro" id="IPR052848">
    <property type="entry name" value="CHCH_domain-containing_protein"/>
</dbReference>
<dbReference type="InterPro" id="IPR031731">
    <property type="entry name" value="CX9C"/>
</dbReference>
<dbReference type="PANTHER" id="PTHR47106">
    <property type="entry name" value="COILED-COIL-HELIX-COILED-COIL-HELIX DOMAIN-CONTAINING PROTEIN 5"/>
    <property type="match status" value="1"/>
</dbReference>
<dbReference type="PANTHER" id="PTHR47106:SF1">
    <property type="entry name" value="COILED-COIL-HELIX-COILED-COIL-HELIX DOMAIN-CONTAINING PROTEIN 5"/>
    <property type="match status" value="1"/>
</dbReference>
<dbReference type="Pfam" id="PF06747">
    <property type="entry name" value="CHCH"/>
    <property type="match status" value="1"/>
</dbReference>
<dbReference type="Pfam" id="PF16860">
    <property type="entry name" value="CX9C"/>
    <property type="match status" value="1"/>
</dbReference>
<dbReference type="PROSITE" id="PS51808">
    <property type="entry name" value="CHCH"/>
    <property type="match status" value="2"/>
</dbReference>
<keyword id="KW-0007">Acetylation</keyword>
<keyword id="KW-1015">Disulfide bond</keyword>
<keyword id="KW-0496">Mitochondrion</keyword>
<keyword id="KW-1185">Reference proteome</keyword>
<organism>
    <name type="scientific">Mus musculus</name>
    <name type="common">Mouse</name>
    <dbReference type="NCBI Taxonomy" id="10090"/>
    <lineage>
        <taxon>Eukaryota</taxon>
        <taxon>Metazoa</taxon>
        <taxon>Chordata</taxon>
        <taxon>Craniata</taxon>
        <taxon>Vertebrata</taxon>
        <taxon>Euteleostomi</taxon>
        <taxon>Mammalia</taxon>
        <taxon>Eutheria</taxon>
        <taxon>Euarchontoglires</taxon>
        <taxon>Glires</taxon>
        <taxon>Rodentia</taxon>
        <taxon>Myomorpha</taxon>
        <taxon>Muroidea</taxon>
        <taxon>Muridae</taxon>
        <taxon>Murinae</taxon>
        <taxon>Mus</taxon>
        <taxon>Mus</taxon>
    </lineage>
</organism>
<name>CHCH5_MOUSE</name>